<organism>
    <name type="scientific">Buchnera aphidicola subsp. Schizaphis graminum (strain Sg)</name>
    <dbReference type="NCBI Taxonomy" id="198804"/>
    <lineage>
        <taxon>Bacteria</taxon>
        <taxon>Pseudomonadati</taxon>
        <taxon>Pseudomonadota</taxon>
        <taxon>Gammaproteobacteria</taxon>
        <taxon>Enterobacterales</taxon>
        <taxon>Erwiniaceae</taxon>
        <taxon>Buchnera</taxon>
    </lineage>
</organism>
<gene>
    <name evidence="1" type="primary">rplK</name>
    <name type="ordered locus">BUsg_039</name>
</gene>
<feature type="chain" id="PRO_0000104260" description="Large ribosomal subunit protein uL11">
    <location>
        <begin position="1"/>
        <end position="142"/>
    </location>
</feature>
<protein>
    <recommendedName>
        <fullName evidence="1">Large ribosomal subunit protein uL11</fullName>
    </recommendedName>
    <alternativeName>
        <fullName evidence="2">50S ribosomal protein L11</fullName>
    </alternativeName>
</protein>
<name>RL11_BUCAP</name>
<accession>Q8KA66</accession>
<sequence>MAKKIQSYIKLQVAAGMANPSPPIGPALGQKGVNIMEFCKLFNKTTENVEKGLPIPVIVTVYSDRSFTFITKTPPASVLLKKAAGIKSGSSKPKIETTGKITKLQIEEIAKTKKNDMTGLNIESMMRSIEGTAKSMGLIVED</sequence>
<proteinExistence type="inferred from homology"/>
<keyword id="KW-0488">Methylation</keyword>
<keyword id="KW-0687">Ribonucleoprotein</keyword>
<keyword id="KW-0689">Ribosomal protein</keyword>
<keyword id="KW-0694">RNA-binding</keyword>
<keyword id="KW-0699">rRNA-binding</keyword>
<reference key="1">
    <citation type="journal article" date="2002" name="Science">
        <title>50 million years of genomic stasis in endosymbiotic bacteria.</title>
        <authorList>
            <person name="Tamas I."/>
            <person name="Klasson L."/>
            <person name="Canbaeck B."/>
            <person name="Naeslund A.K."/>
            <person name="Eriksson A.-S."/>
            <person name="Wernegreen J.J."/>
            <person name="Sandstroem J.P."/>
            <person name="Moran N.A."/>
            <person name="Andersson S.G.E."/>
        </authorList>
    </citation>
    <scope>NUCLEOTIDE SEQUENCE [LARGE SCALE GENOMIC DNA]</scope>
    <source>
        <strain>Sg</strain>
    </source>
</reference>
<dbReference type="EMBL" id="AE013218">
    <property type="protein sequence ID" value="AAM67610.1"/>
    <property type="molecule type" value="Genomic_DNA"/>
</dbReference>
<dbReference type="RefSeq" id="WP_011053576.1">
    <property type="nucleotide sequence ID" value="NC_004061.1"/>
</dbReference>
<dbReference type="SMR" id="Q8KA66"/>
<dbReference type="STRING" id="198804.BUsg_039"/>
<dbReference type="GeneID" id="93003502"/>
<dbReference type="KEGG" id="bas:BUsg_039"/>
<dbReference type="eggNOG" id="COG0080">
    <property type="taxonomic scope" value="Bacteria"/>
</dbReference>
<dbReference type="HOGENOM" id="CLU_074237_2_0_6"/>
<dbReference type="Proteomes" id="UP000000416">
    <property type="component" value="Chromosome"/>
</dbReference>
<dbReference type="GO" id="GO:0022625">
    <property type="term" value="C:cytosolic large ribosomal subunit"/>
    <property type="evidence" value="ECO:0007669"/>
    <property type="project" value="TreeGrafter"/>
</dbReference>
<dbReference type="GO" id="GO:0070180">
    <property type="term" value="F:large ribosomal subunit rRNA binding"/>
    <property type="evidence" value="ECO:0007669"/>
    <property type="project" value="UniProtKB-UniRule"/>
</dbReference>
<dbReference type="GO" id="GO:0003735">
    <property type="term" value="F:structural constituent of ribosome"/>
    <property type="evidence" value="ECO:0007669"/>
    <property type="project" value="InterPro"/>
</dbReference>
<dbReference type="GO" id="GO:0006412">
    <property type="term" value="P:translation"/>
    <property type="evidence" value="ECO:0007669"/>
    <property type="project" value="UniProtKB-UniRule"/>
</dbReference>
<dbReference type="CDD" id="cd00349">
    <property type="entry name" value="Ribosomal_L11"/>
    <property type="match status" value="1"/>
</dbReference>
<dbReference type="FunFam" id="1.10.10.250:FF:000001">
    <property type="entry name" value="50S ribosomal protein L11"/>
    <property type="match status" value="1"/>
</dbReference>
<dbReference type="FunFam" id="3.30.1550.10:FF:000001">
    <property type="entry name" value="50S ribosomal protein L11"/>
    <property type="match status" value="1"/>
</dbReference>
<dbReference type="Gene3D" id="1.10.10.250">
    <property type="entry name" value="Ribosomal protein L11, C-terminal domain"/>
    <property type="match status" value="1"/>
</dbReference>
<dbReference type="Gene3D" id="3.30.1550.10">
    <property type="entry name" value="Ribosomal protein L11/L12, N-terminal domain"/>
    <property type="match status" value="1"/>
</dbReference>
<dbReference type="HAMAP" id="MF_00736">
    <property type="entry name" value="Ribosomal_uL11"/>
    <property type="match status" value="1"/>
</dbReference>
<dbReference type="InterPro" id="IPR000911">
    <property type="entry name" value="Ribosomal_uL11"/>
</dbReference>
<dbReference type="InterPro" id="IPR006519">
    <property type="entry name" value="Ribosomal_uL11_bac-typ"/>
</dbReference>
<dbReference type="InterPro" id="IPR020783">
    <property type="entry name" value="Ribosomal_uL11_C"/>
</dbReference>
<dbReference type="InterPro" id="IPR036769">
    <property type="entry name" value="Ribosomal_uL11_C_sf"/>
</dbReference>
<dbReference type="InterPro" id="IPR020785">
    <property type="entry name" value="Ribosomal_uL11_CS"/>
</dbReference>
<dbReference type="InterPro" id="IPR020784">
    <property type="entry name" value="Ribosomal_uL11_N"/>
</dbReference>
<dbReference type="InterPro" id="IPR036796">
    <property type="entry name" value="Ribosomal_uL11_N_sf"/>
</dbReference>
<dbReference type="NCBIfam" id="TIGR01632">
    <property type="entry name" value="L11_bact"/>
    <property type="match status" value="1"/>
</dbReference>
<dbReference type="PANTHER" id="PTHR11661">
    <property type="entry name" value="60S RIBOSOMAL PROTEIN L12"/>
    <property type="match status" value="1"/>
</dbReference>
<dbReference type="PANTHER" id="PTHR11661:SF1">
    <property type="entry name" value="LARGE RIBOSOMAL SUBUNIT PROTEIN UL11M"/>
    <property type="match status" value="1"/>
</dbReference>
<dbReference type="Pfam" id="PF00298">
    <property type="entry name" value="Ribosomal_L11"/>
    <property type="match status" value="1"/>
</dbReference>
<dbReference type="Pfam" id="PF03946">
    <property type="entry name" value="Ribosomal_L11_N"/>
    <property type="match status" value="1"/>
</dbReference>
<dbReference type="SMART" id="SM00649">
    <property type="entry name" value="RL11"/>
    <property type="match status" value="1"/>
</dbReference>
<dbReference type="SUPFAM" id="SSF54747">
    <property type="entry name" value="Ribosomal L11/L12e N-terminal domain"/>
    <property type="match status" value="1"/>
</dbReference>
<dbReference type="SUPFAM" id="SSF46906">
    <property type="entry name" value="Ribosomal protein L11, C-terminal domain"/>
    <property type="match status" value="1"/>
</dbReference>
<dbReference type="PROSITE" id="PS00359">
    <property type="entry name" value="RIBOSOMAL_L11"/>
    <property type="match status" value="1"/>
</dbReference>
<evidence type="ECO:0000255" key="1">
    <source>
        <dbReference type="HAMAP-Rule" id="MF_00736"/>
    </source>
</evidence>
<evidence type="ECO:0000305" key="2"/>
<comment type="function">
    <text evidence="1">Forms part of the ribosomal stalk which helps the ribosome interact with GTP-bound translation factors.</text>
</comment>
<comment type="subunit">
    <text evidence="1">Part of the ribosomal stalk of the 50S ribosomal subunit. Interacts with L10 and the large rRNA to form the base of the stalk. L10 forms an elongated spine to which L12 dimers bind in a sequential fashion forming a multimeric L10(L12)X complex.</text>
</comment>
<comment type="PTM">
    <text evidence="1">One or more lysine residues are methylated.</text>
</comment>
<comment type="similarity">
    <text evidence="1">Belongs to the universal ribosomal protein uL11 family.</text>
</comment>